<protein>
    <recommendedName>
        <fullName evidence="1">DNA mismatch repair protein MutH</fullName>
    </recommendedName>
    <alternativeName>
        <fullName evidence="1">Methyl-directed mismatch repair protein</fullName>
    </alternativeName>
</protein>
<reference key="1">
    <citation type="journal article" date="2011" name="J. Bacteriol.">
        <title>Comparative genomics of 28 Salmonella enterica isolates: evidence for CRISPR-mediated adaptive sublineage evolution.</title>
        <authorList>
            <person name="Fricke W.F."/>
            <person name="Mammel M.K."/>
            <person name="McDermott P.F."/>
            <person name="Tartera C."/>
            <person name="White D.G."/>
            <person name="Leclerc J.E."/>
            <person name="Ravel J."/>
            <person name="Cebula T.A."/>
        </authorList>
    </citation>
    <scope>NUCLEOTIDE SEQUENCE [LARGE SCALE GENOMIC DNA]</scope>
    <source>
        <strain>SL254</strain>
    </source>
</reference>
<dbReference type="EMBL" id="CP001113">
    <property type="protein sequence ID" value="ACF64802.1"/>
    <property type="molecule type" value="Genomic_DNA"/>
</dbReference>
<dbReference type="RefSeq" id="WP_001274930.1">
    <property type="nucleotide sequence ID" value="NZ_CCMR01000001.1"/>
</dbReference>
<dbReference type="SMR" id="B4T4Z8"/>
<dbReference type="KEGG" id="see:SNSL254_A3233"/>
<dbReference type="HOGENOM" id="CLU_086669_0_0_6"/>
<dbReference type="Proteomes" id="UP000008824">
    <property type="component" value="Chromosome"/>
</dbReference>
<dbReference type="GO" id="GO:0005737">
    <property type="term" value="C:cytoplasm"/>
    <property type="evidence" value="ECO:0007669"/>
    <property type="project" value="UniProtKB-SubCell"/>
</dbReference>
<dbReference type="GO" id="GO:0003677">
    <property type="term" value="F:DNA binding"/>
    <property type="evidence" value="ECO:0007669"/>
    <property type="project" value="InterPro"/>
</dbReference>
<dbReference type="GO" id="GO:0004519">
    <property type="term" value="F:endonuclease activity"/>
    <property type="evidence" value="ECO:0007669"/>
    <property type="project" value="UniProtKB-UniRule"/>
</dbReference>
<dbReference type="GO" id="GO:0006304">
    <property type="term" value="P:DNA modification"/>
    <property type="evidence" value="ECO:0007669"/>
    <property type="project" value="InterPro"/>
</dbReference>
<dbReference type="GO" id="GO:0006298">
    <property type="term" value="P:mismatch repair"/>
    <property type="evidence" value="ECO:0007669"/>
    <property type="project" value="UniProtKB-UniRule"/>
</dbReference>
<dbReference type="CDD" id="cd00583">
    <property type="entry name" value="MutH-like"/>
    <property type="match status" value="1"/>
</dbReference>
<dbReference type="FunFam" id="3.40.600.10:FF:000001">
    <property type="entry name" value="DNA mismatch repair protein MutH"/>
    <property type="match status" value="1"/>
</dbReference>
<dbReference type="Gene3D" id="3.40.600.10">
    <property type="entry name" value="DNA mismatch repair MutH/Restriction endonuclease, type II"/>
    <property type="match status" value="1"/>
</dbReference>
<dbReference type="HAMAP" id="MF_00759">
    <property type="entry name" value="MutH"/>
    <property type="match status" value="1"/>
</dbReference>
<dbReference type="InterPro" id="IPR004230">
    <property type="entry name" value="DNA_mismatch_repair_MutH"/>
</dbReference>
<dbReference type="InterPro" id="IPR011337">
    <property type="entry name" value="DNA_rep_MutH/RE_typeII_Sau3AI"/>
</dbReference>
<dbReference type="InterPro" id="IPR037057">
    <property type="entry name" value="DNA_rep_MutH/T2_RE_sf"/>
</dbReference>
<dbReference type="InterPro" id="IPR011335">
    <property type="entry name" value="Restrct_endonuc-II-like"/>
</dbReference>
<dbReference type="NCBIfam" id="TIGR02248">
    <property type="entry name" value="mutH_TIGR"/>
    <property type="match status" value="1"/>
</dbReference>
<dbReference type="NCBIfam" id="NF003458">
    <property type="entry name" value="PRK05070.1"/>
    <property type="match status" value="1"/>
</dbReference>
<dbReference type="Pfam" id="PF02976">
    <property type="entry name" value="MutH"/>
    <property type="match status" value="1"/>
</dbReference>
<dbReference type="SMART" id="SM00927">
    <property type="entry name" value="MutH"/>
    <property type="match status" value="1"/>
</dbReference>
<dbReference type="SUPFAM" id="SSF52980">
    <property type="entry name" value="Restriction endonuclease-like"/>
    <property type="match status" value="1"/>
</dbReference>
<feature type="chain" id="PRO_1000133474" description="DNA mismatch repair protein MutH">
    <location>
        <begin position="1"/>
        <end position="231"/>
    </location>
</feature>
<keyword id="KW-0963">Cytoplasm</keyword>
<keyword id="KW-0227">DNA damage</keyword>
<keyword id="KW-0234">DNA repair</keyword>
<keyword id="KW-0255">Endonuclease</keyword>
<keyword id="KW-0378">Hydrolase</keyword>
<keyword id="KW-0540">Nuclease</keyword>
<proteinExistence type="inferred from homology"/>
<evidence type="ECO:0000255" key="1">
    <source>
        <dbReference type="HAMAP-Rule" id="MF_00759"/>
    </source>
</evidence>
<accession>B4T4Z8</accession>
<comment type="function">
    <text evidence="1">Sequence-specific endonuclease that cleaves unmethylated GATC sequences. It is involved in DNA mismatch repair.</text>
</comment>
<comment type="subcellular location">
    <subcellularLocation>
        <location evidence="1">Cytoplasm</location>
    </subcellularLocation>
</comment>
<comment type="similarity">
    <text evidence="1">Belongs to the MutH family.</text>
</comment>
<gene>
    <name evidence="1" type="primary">mutH</name>
    <name type="ordered locus">SNSL254_A3233</name>
</gene>
<organism>
    <name type="scientific">Salmonella newport (strain SL254)</name>
    <dbReference type="NCBI Taxonomy" id="423368"/>
    <lineage>
        <taxon>Bacteria</taxon>
        <taxon>Pseudomonadati</taxon>
        <taxon>Pseudomonadota</taxon>
        <taxon>Gammaproteobacteria</taxon>
        <taxon>Enterobacterales</taxon>
        <taxon>Enterobacteriaceae</taxon>
        <taxon>Salmonella</taxon>
    </lineage>
</organism>
<sequence length="231" mass="25410">MSALCPLLTPPASEALLLAQARQLSGYTLGELAAMAGITTPKDLKRDKGWIGVLLEIWLGASAGSKPEQDFAALGVELKTIPVDSLGRPLETTFVCVAPLTGNSGVTWETSHVRHKLKRVLWVPVEGDRSIPLAERRVGSPLLWSPSEEEDRQLRLDWEELMDMIVLGQVERITARHGEVLQLRPKAANARALTEAIGARGEPILTLPRGFYLKKNFTQALLARHFLLQNP</sequence>
<name>MUTH_SALNS</name>